<feature type="chain" id="PRO_0000180802" description="Flagellar basal-body rod protein FlgC">
    <location>
        <begin position="1"/>
        <end position="136"/>
    </location>
</feature>
<organism>
    <name type="scientific">Buchnera aphidicola subsp. Baizongia pistaciae (strain Bp)</name>
    <dbReference type="NCBI Taxonomy" id="224915"/>
    <lineage>
        <taxon>Bacteria</taxon>
        <taxon>Pseudomonadati</taxon>
        <taxon>Pseudomonadota</taxon>
        <taxon>Gammaproteobacteria</taxon>
        <taxon>Enterobacterales</taxon>
        <taxon>Erwiniaceae</taxon>
        <taxon>Buchnera</taxon>
    </lineage>
</organism>
<evidence type="ECO:0000250" key="1"/>
<evidence type="ECO:0000305" key="2"/>
<protein>
    <recommendedName>
        <fullName>Flagellar basal-body rod protein FlgC</fullName>
    </recommendedName>
</protein>
<name>FLGC_BUCBP</name>
<sequence length="136" mass="14920">MSLFNIFNISGSALETQSKKMDVHAKNLANSDSYIYKNGTLYPYVARIPMLQFDPISENNVGGVKMHTVAGDTSSLKSIYNPNSPIADSNGYSKVSNVDIMSETINAITASKNYQTNLEILNTTKNMIMKTLTIGQ</sequence>
<gene>
    <name type="primary">flgC</name>
    <name type="ordered locus">bbp_311</name>
</gene>
<comment type="subunit">
    <text evidence="1">The basal body constitutes a major portion of the flagellar organelle and consists of four rings (L,P,S, and M) mounted on a central rod. The rod consists of about 26 subunits of FlgG in the distal portion, and FlgB, FlgC and FlgF are thought to build up the proximal portion of the rod with about 6 subunits each (By similarity).</text>
</comment>
<comment type="subcellular location">
    <subcellularLocation>
        <location evidence="1">Bacterial flagellum basal body</location>
    </subcellularLocation>
</comment>
<comment type="similarity">
    <text evidence="2">Belongs to the flagella basal body rod proteins family.</text>
</comment>
<accession>Q89AH9</accession>
<reference key="1">
    <citation type="journal article" date="2003" name="Proc. Natl. Acad. Sci. U.S.A.">
        <title>Reductive genome evolution in Buchnera aphidicola.</title>
        <authorList>
            <person name="van Ham R.C.H.J."/>
            <person name="Kamerbeek J."/>
            <person name="Palacios C."/>
            <person name="Rausell C."/>
            <person name="Abascal F."/>
            <person name="Bastolla U."/>
            <person name="Fernandez J.M."/>
            <person name="Jimenez L."/>
            <person name="Postigo M."/>
            <person name="Silva F.J."/>
            <person name="Tamames J."/>
            <person name="Viguera E."/>
            <person name="Latorre A."/>
            <person name="Valencia A."/>
            <person name="Moran F."/>
            <person name="Moya A."/>
        </authorList>
    </citation>
    <scope>NUCLEOTIDE SEQUENCE [LARGE SCALE GENOMIC DNA]</scope>
    <source>
        <strain>Bp</strain>
    </source>
</reference>
<keyword id="KW-0975">Bacterial flagellum</keyword>
<keyword id="KW-1185">Reference proteome</keyword>
<proteinExistence type="inferred from homology"/>
<dbReference type="EMBL" id="AE016826">
    <property type="protein sequence ID" value="AAO27033.1"/>
    <property type="molecule type" value="Genomic_DNA"/>
</dbReference>
<dbReference type="RefSeq" id="WP_011091434.1">
    <property type="nucleotide sequence ID" value="NC_004545.1"/>
</dbReference>
<dbReference type="SMR" id="Q89AH9"/>
<dbReference type="STRING" id="224915.bbp_311"/>
<dbReference type="KEGG" id="bab:bbp_311"/>
<dbReference type="eggNOG" id="COG1558">
    <property type="taxonomic scope" value="Bacteria"/>
</dbReference>
<dbReference type="HOGENOM" id="CLU_123272_1_0_6"/>
<dbReference type="OrthoDB" id="9794148at2"/>
<dbReference type="Proteomes" id="UP000000601">
    <property type="component" value="Chromosome"/>
</dbReference>
<dbReference type="GO" id="GO:0030694">
    <property type="term" value="C:bacterial-type flagellum basal body, rod"/>
    <property type="evidence" value="ECO:0007669"/>
    <property type="project" value="InterPro"/>
</dbReference>
<dbReference type="GO" id="GO:0071978">
    <property type="term" value="P:bacterial-type flagellum-dependent swarming motility"/>
    <property type="evidence" value="ECO:0007669"/>
    <property type="project" value="TreeGrafter"/>
</dbReference>
<dbReference type="InterPro" id="IPR010930">
    <property type="entry name" value="Flg_bb/hook_C_dom"/>
</dbReference>
<dbReference type="InterPro" id="IPR006299">
    <property type="entry name" value="FlgC"/>
</dbReference>
<dbReference type="NCBIfam" id="TIGR01395">
    <property type="entry name" value="FlgC"/>
    <property type="match status" value="1"/>
</dbReference>
<dbReference type="PANTHER" id="PTHR30435:SF2">
    <property type="entry name" value="FLAGELLAR BASAL-BODY ROD PROTEIN FLGC"/>
    <property type="match status" value="1"/>
</dbReference>
<dbReference type="PANTHER" id="PTHR30435">
    <property type="entry name" value="FLAGELLAR PROTEIN"/>
    <property type="match status" value="1"/>
</dbReference>
<dbReference type="Pfam" id="PF06429">
    <property type="entry name" value="Flg_bbr_C"/>
    <property type="match status" value="1"/>
</dbReference>